<reference key="1">
    <citation type="submission" date="2007-02" db="EMBL/GenBank/DDBJ databases">
        <title>Complete sequence of chromosome 1 of Rhodobacter sphaeroides ATCC 17029.</title>
        <authorList>
            <person name="Copeland A."/>
            <person name="Lucas S."/>
            <person name="Lapidus A."/>
            <person name="Barry K."/>
            <person name="Detter J.C."/>
            <person name="Glavina del Rio T."/>
            <person name="Hammon N."/>
            <person name="Israni S."/>
            <person name="Dalin E."/>
            <person name="Tice H."/>
            <person name="Pitluck S."/>
            <person name="Kiss H."/>
            <person name="Brettin T."/>
            <person name="Bruce D."/>
            <person name="Han C."/>
            <person name="Tapia R."/>
            <person name="Gilna P."/>
            <person name="Schmutz J."/>
            <person name="Larimer F."/>
            <person name="Land M."/>
            <person name="Hauser L."/>
            <person name="Kyrpides N."/>
            <person name="Mikhailova N."/>
            <person name="Richardson P."/>
            <person name="Mackenzie C."/>
            <person name="Choudhary M."/>
            <person name="Donohue T.J."/>
            <person name="Kaplan S."/>
        </authorList>
    </citation>
    <scope>NUCLEOTIDE SEQUENCE [LARGE SCALE GENOMIC DNA]</scope>
    <source>
        <strain>ATCC 17029 / ATH 2.4.9</strain>
    </source>
</reference>
<evidence type="ECO:0000250" key="1"/>
<evidence type="ECO:0000255" key="2">
    <source>
        <dbReference type="HAMAP-Rule" id="MF_01346"/>
    </source>
</evidence>
<protein>
    <recommendedName>
        <fullName evidence="2">ATP synthase subunit alpha 1</fullName>
        <ecNumber evidence="2">7.1.2.2</ecNumber>
    </recommendedName>
    <alternativeName>
        <fullName evidence="2">ATP synthase F1 sector subunit alpha 1</fullName>
    </alternativeName>
    <alternativeName>
        <fullName evidence="2">F-ATPase subunit alpha 1</fullName>
    </alternativeName>
</protein>
<accession>A3PIB7</accession>
<dbReference type="EC" id="7.1.2.2" evidence="2"/>
<dbReference type="EMBL" id="CP000577">
    <property type="protein sequence ID" value="ABN76083.1"/>
    <property type="molecule type" value="Genomic_DNA"/>
</dbReference>
<dbReference type="SMR" id="A3PIB7"/>
<dbReference type="KEGG" id="rsh:Rsph17029_0972"/>
<dbReference type="HOGENOM" id="CLU_010091_2_1_5"/>
<dbReference type="GO" id="GO:0005886">
    <property type="term" value="C:plasma membrane"/>
    <property type="evidence" value="ECO:0007669"/>
    <property type="project" value="UniProtKB-SubCell"/>
</dbReference>
<dbReference type="GO" id="GO:0045259">
    <property type="term" value="C:proton-transporting ATP synthase complex"/>
    <property type="evidence" value="ECO:0007669"/>
    <property type="project" value="UniProtKB-KW"/>
</dbReference>
<dbReference type="GO" id="GO:0043531">
    <property type="term" value="F:ADP binding"/>
    <property type="evidence" value="ECO:0007669"/>
    <property type="project" value="TreeGrafter"/>
</dbReference>
<dbReference type="GO" id="GO:0005524">
    <property type="term" value="F:ATP binding"/>
    <property type="evidence" value="ECO:0007669"/>
    <property type="project" value="UniProtKB-UniRule"/>
</dbReference>
<dbReference type="GO" id="GO:0046933">
    <property type="term" value="F:proton-transporting ATP synthase activity, rotational mechanism"/>
    <property type="evidence" value="ECO:0007669"/>
    <property type="project" value="UniProtKB-UniRule"/>
</dbReference>
<dbReference type="CDD" id="cd18113">
    <property type="entry name" value="ATP-synt_F1_alpha_C"/>
    <property type="match status" value="1"/>
</dbReference>
<dbReference type="CDD" id="cd18116">
    <property type="entry name" value="ATP-synt_F1_alpha_N"/>
    <property type="match status" value="1"/>
</dbReference>
<dbReference type="CDD" id="cd01132">
    <property type="entry name" value="F1-ATPase_alpha_CD"/>
    <property type="match status" value="1"/>
</dbReference>
<dbReference type="FunFam" id="1.20.150.20:FF:000001">
    <property type="entry name" value="ATP synthase subunit alpha"/>
    <property type="match status" value="1"/>
</dbReference>
<dbReference type="FunFam" id="2.40.30.20:FF:000001">
    <property type="entry name" value="ATP synthase subunit alpha"/>
    <property type="match status" value="1"/>
</dbReference>
<dbReference type="FunFam" id="3.40.50.300:FF:002432">
    <property type="entry name" value="ATP synthase subunit alpha, mitochondrial"/>
    <property type="match status" value="1"/>
</dbReference>
<dbReference type="Gene3D" id="2.40.30.20">
    <property type="match status" value="1"/>
</dbReference>
<dbReference type="Gene3D" id="1.20.150.20">
    <property type="entry name" value="ATP synthase alpha/beta chain, C-terminal domain"/>
    <property type="match status" value="1"/>
</dbReference>
<dbReference type="Gene3D" id="3.40.50.300">
    <property type="entry name" value="P-loop containing nucleotide triphosphate hydrolases"/>
    <property type="match status" value="1"/>
</dbReference>
<dbReference type="HAMAP" id="MF_01346">
    <property type="entry name" value="ATP_synth_alpha_bact"/>
    <property type="match status" value="1"/>
</dbReference>
<dbReference type="InterPro" id="IPR023366">
    <property type="entry name" value="ATP_synth_asu-like_sf"/>
</dbReference>
<dbReference type="InterPro" id="IPR000793">
    <property type="entry name" value="ATP_synth_asu_C"/>
</dbReference>
<dbReference type="InterPro" id="IPR038376">
    <property type="entry name" value="ATP_synth_asu_C_sf"/>
</dbReference>
<dbReference type="InterPro" id="IPR033732">
    <property type="entry name" value="ATP_synth_F1_a_nt-bd_dom"/>
</dbReference>
<dbReference type="InterPro" id="IPR005294">
    <property type="entry name" value="ATP_synth_F1_asu"/>
</dbReference>
<dbReference type="InterPro" id="IPR020003">
    <property type="entry name" value="ATPase_a/bsu_AS"/>
</dbReference>
<dbReference type="InterPro" id="IPR004100">
    <property type="entry name" value="ATPase_F1/V1/A1_a/bsu_N"/>
</dbReference>
<dbReference type="InterPro" id="IPR036121">
    <property type="entry name" value="ATPase_F1/V1/A1_a/bsu_N_sf"/>
</dbReference>
<dbReference type="InterPro" id="IPR000194">
    <property type="entry name" value="ATPase_F1/V1/A1_a/bsu_nucl-bd"/>
</dbReference>
<dbReference type="InterPro" id="IPR027417">
    <property type="entry name" value="P-loop_NTPase"/>
</dbReference>
<dbReference type="NCBIfam" id="TIGR00962">
    <property type="entry name" value="atpA"/>
    <property type="match status" value="1"/>
</dbReference>
<dbReference type="NCBIfam" id="NF009884">
    <property type="entry name" value="PRK13343.1"/>
    <property type="match status" value="1"/>
</dbReference>
<dbReference type="PANTHER" id="PTHR48082">
    <property type="entry name" value="ATP SYNTHASE SUBUNIT ALPHA, MITOCHONDRIAL"/>
    <property type="match status" value="1"/>
</dbReference>
<dbReference type="PANTHER" id="PTHR48082:SF2">
    <property type="entry name" value="ATP SYNTHASE SUBUNIT ALPHA, MITOCHONDRIAL"/>
    <property type="match status" value="1"/>
</dbReference>
<dbReference type="Pfam" id="PF00006">
    <property type="entry name" value="ATP-synt_ab"/>
    <property type="match status" value="1"/>
</dbReference>
<dbReference type="Pfam" id="PF00306">
    <property type="entry name" value="ATP-synt_ab_C"/>
    <property type="match status" value="1"/>
</dbReference>
<dbReference type="Pfam" id="PF02874">
    <property type="entry name" value="ATP-synt_ab_N"/>
    <property type="match status" value="1"/>
</dbReference>
<dbReference type="PIRSF" id="PIRSF039088">
    <property type="entry name" value="F_ATPase_subunit_alpha"/>
    <property type="match status" value="1"/>
</dbReference>
<dbReference type="SUPFAM" id="SSF47917">
    <property type="entry name" value="C-terminal domain of alpha and beta subunits of F1 ATP synthase"/>
    <property type="match status" value="1"/>
</dbReference>
<dbReference type="SUPFAM" id="SSF50615">
    <property type="entry name" value="N-terminal domain of alpha and beta subunits of F1 ATP synthase"/>
    <property type="match status" value="1"/>
</dbReference>
<dbReference type="SUPFAM" id="SSF52540">
    <property type="entry name" value="P-loop containing nucleoside triphosphate hydrolases"/>
    <property type="match status" value="1"/>
</dbReference>
<dbReference type="PROSITE" id="PS00152">
    <property type="entry name" value="ATPASE_ALPHA_BETA"/>
    <property type="match status" value="1"/>
</dbReference>
<name>ATPA1_CERS1</name>
<organism>
    <name type="scientific">Cereibacter sphaeroides (strain ATCC 17029 / ATH 2.4.9)</name>
    <name type="common">Rhodobacter sphaeroides</name>
    <dbReference type="NCBI Taxonomy" id="349101"/>
    <lineage>
        <taxon>Bacteria</taxon>
        <taxon>Pseudomonadati</taxon>
        <taxon>Pseudomonadota</taxon>
        <taxon>Alphaproteobacteria</taxon>
        <taxon>Rhodobacterales</taxon>
        <taxon>Paracoccaceae</taxon>
        <taxon>Cereibacter</taxon>
    </lineage>
</organism>
<feature type="chain" id="PRO_0000339051" description="ATP synthase subunit alpha 1">
    <location>
        <begin position="1"/>
        <end position="512"/>
    </location>
</feature>
<feature type="binding site" evidence="2">
    <location>
        <begin position="169"/>
        <end position="176"/>
    </location>
    <ligand>
        <name>ATP</name>
        <dbReference type="ChEBI" id="CHEBI:30616"/>
    </ligand>
</feature>
<feature type="site" description="Required for activity" evidence="2">
    <location>
        <position position="372"/>
    </location>
</feature>
<keyword id="KW-0066">ATP synthesis</keyword>
<keyword id="KW-0067">ATP-binding</keyword>
<keyword id="KW-0997">Cell inner membrane</keyword>
<keyword id="KW-1003">Cell membrane</keyword>
<keyword id="KW-0139">CF(1)</keyword>
<keyword id="KW-0375">Hydrogen ion transport</keyword>
<keyword id="KW-0406">Ion transport</keyword>
<keyword id="KW-0472">Membrane</keyword>
<keyword id="KW-0547">Nucleotide-binding</keyword>
<keyword id="KW-1278">Translocase</keyword>
<keyword id="KW-0813">Transport</keyword>
<gene>
    <name evidence="2" type="primary">atpA1</name>
    <name type="ordered locus">Rsph17029_0972</name>
</gene>
<comment type="function">
    <text evidence="2">Produces ATP from ADP in the presence of a proton gradient across the membrane. The alpha chain is a regulatory subunit.</text>
</comment>
<comment type="catalytic activity">
    <reaction evidence="2">
        <text>ATP + H2O + 4 H(+)(in) = ADP + phosphate + 5 H(+)(out)</text>
        <dbReference type="Rhea" id="RHEA:57720"/>
        <dbReference type="ChEBI" id="CHEBI:15377"/>
        <dbReference type="ChEBI" id="CHEBI:15378"/>
        <dbReference type="ChEBI" id="CHEBI:30616"/>
        <dbReference type="ChEBI" id="CHEBI:43474"/>
        <dbReference type="ChEBI" id="CHEBI:456216"/>
        <dbReference type="EC" id="7.1.2.2"/>
    </reaction>
</comment>
<comment type="subunit">
    <text evidence="1">F-type ATPases have 2 components, CF(1) - the catalytic core - and CF(0) - the membrane proton channel. CF(1) has five subunits: alpha(3), beta(3), gamma(1), delta(1), epsilon(1). CF(0) has four main subunits: a(1), b(1), b'(1) and c(9-12) (By similarity).</text>
</comment>
<comment type="subcellular location">
    <subcellularLocation>
        <location evidence="2">Cell inner membrane</location>
        <topology evidence="2">Peripheral membrane protein</topology>
    </subcellularLocation>
</comment>
<comment type="similarity">
    <text evidence="2">Belongs to the ATPase alpha/beta chains family.</text>
</comment>
<proteinExistence type="inferred from homology"/>
<sequence length="512" mass="55187">MGIQAAEISAILKEQIKNFGQQAEVAEVGRVLSVGDGIARVHGLDNVQAGEMVEFPGGIRGMALNLEVDNVGVVIFGDDRSIKEGDTVKRTKSIVDVPAGDALLGRVVDGLGNPIDGKGPIAATERRVADVKAPGIIPRKGVHEPMATGLKSVDAMIPIGRGQRELIIGDRQTGKTAIALDTILNQKSYNEAAGDDESKKLYCIYVAIGQKRSTVAQLVKKLEETGAIDYTLVVAATASDPAPMQFLAPYAATAMAEYFRDNGRHALIIYDDLSKQAVAYRQMSLLLRRPPGREAYPGDVFYLHSRLLERSAKLNKDHGAGSLTALPIIETQGGDVSAFIPTNVISITDGQIFLETELFYQGIRPAVNTGLSVSRVGSSAQTDAMKSVAGPVKLELAQYREMAAFAQFGSDLDAATQQLLNRGARLTELMKQPQYAPLTNAEIVCVIFAGTKGYLDKVPVKDVGRWEQGLLKHLRTNAKDLLADITNNDRKVKGELEDKIRAALDTYAKDFA</sequence>